<gene>
    <name type="ordered locus">alr2735</name>
</gene>
<accession>Q8YTI2</accession>
<keyword id="KW-1185">Reference proteome</keyword>
<reference key="1">
    <citation type="journal article" date="2001" name="DNA Res.">
        <title>Complete genomic sequence of the filamentous nitrogen-fixing cyanobacterium Anabaena sp. strain PCC 7120.</title>
        <authorList>
            <person name="Kaneko T."/>
            <person name="Nakamura Y."/>
            <person name="Wolk C.P."/>
            <person name="Kuritz T."/>
            <person name="Sasamoto S."/>
            <person name="Watanabe A."/>
            <person name="Iriguchi M."/>
            <person name="Ishikawa A."/>
            <person name="Kawashima K."/>
            <person name="Kimura T."/>
            <person name="Kishida Y."/>
            <person name="Kohara M."/>
            <person name="Matsumoto M."/>
            <person name="Matsuno A."/>
            <person name="Muraki A."/>
            <person name="Nakazaki N."/>
            <person name="Shimpo S."/>
            <person name="Sugimoto M."/>
            <person name="Takazawa M."/>
            <person name="Yamada M."/>
            <person name="Yasuda M."/>
            <person name="Tabata S."/>
        </authorList>
    </citation>
    <scope>NUCLEOTIDE SEQUENCE [LARGE SCALE GENOMIC DNA]</scope>
    <source>
        <strain>PCC 7120 / SAG 25.82 / UTEX 2576</strain>
    </source>
</reference>
<feature type="chain" id="PRO_0000208897" description="Uncharacterized protein alr2735">
    <location>
        <begin position="1"/>
        <end position="210"/>
    </location>
</feature>
<name>Y2735_NOSS1</name>
<sequence>MMTPMQGVAATPINSHQFEPYTKENSEANADFSFQTLADVTKAILNHAFWLAEQKQNLSLKEYKKLLYNQGWQGEEKKYLKIAATFGKFEPQDFAQVEPRTIYQLAERNKQYQKVIDRLLDLSVINQETVRTLIQKQRTPRADRPKKPSIWRRLKNGGRYCQIPPIHEASEQTGTTLQRMMDEEGLSAQQIVAEAIALRQAYKEGQLTIS</sequence>
<organism>
    <name type="scientific">Nostoc sp. (strain PCC 7120 / SAG 25.82 / UTEX 2576)</name>
    <dbReference type="NCBI Taxonomy" id="103690"/>
    <lineage>
        <taxon>Bacteria</taxon>
        <taxon>Bacillati</taxon>
        <taxon>Cyanobacteriota</taxon>
        <taxon>Cyanophyceae</taxon>
        <taxon>Nostocales</taxon>
        <taxon>Nostocaceae</taxon>
        <taxon>Nostoc</taxon>
    </lineage>
</organism>
<protein>
    <recommendedName>
        <fullName>Uncharacterized protein alr2735</fullName>
    </recommendedName>
</protein>
<dbReference type="EMBL" id="BA000019">
    <property type="protein sequence ID" value="BAB74434.1"/>
    <property type="molecule type" value="Genomic_DNA"/>
</dbReference>
<dbReference type="PIR" id="AH2147">
    <property type="entry name" value="AH2147"/>
</dbReference>
<dbReference type="RefSeq" id="WP_010996888.1">
    <property type="nucleotide sequence ID" value="NZ_RSCN01000030.1"/>
</dbReference>
<dbReference type="KEGG" id="ana:alr2735"/>
<dbReference type="eggNOG" id="ENOG5033KKH">
    <property type="taxonomic scope" value="Bacteria"/>
</dbReference>
<dbReference type="OrthoDB" id="508029at2"/>
<dbReference type="Proteomes" id="UP000002483">
    <property type="component" value="Chromosome"/>
</dbReference>
<proteinExistence type="predicted"/>